<proteinExistence type="inferred from homology"/>
<reference key="1">
    <citation type="journal article" date="1997" name="Nature">
        <title>The complete genome sequence of the hyperthermophilic, sulphate-reducing archaeon Archaeoglobus fulgidus.</title>
        <authorList>
            <person name="Klenk H.-P."/>
            <person name="Clayton R.A."/>
            <person name="Tomb J.-F."/>
            <person name="White O."/>
            <person name="Nelson K.E."/>
            <person name="Ketchum K.A."/>
            <person name="Dodson R.J."/>
            <person name="Gwinn M.L."/>
            <person name="Hickey E.K."/>
            <person name="Peterson J.D."/>
            <person name="Richardson D.L."/>
            <person name="Kerlavage A.R."/>
            <person name="Graham D.E."/>
            <person name="Kyrpides N.C."/>
            <person name="Fleischmann R.D."/>
            <person name="Quackenbush J."/>
            <person name="Lee N.H."/>
            <person name="Sutton G.G."/>
            <person name="Gill S.R."/>
            <person name="Kirkness E.F."/>
            <person name="Dougherty B.A."/>
            <person name="McKenney K."/>
            <person name="Adams M.D."/>
            <person name="Loftus B.J."/>
            <person name="Peterson S.N."/>
            <person name="Reich C.I."/>
            <person name="McNeil L.K."/>
            <person name="Badger J.H."/>
            <person name="Glodek A."/>
            <person name="Zhou L."/>
            <person name="Overbeek R."/>
            <person name="Gocayne J.D."/>
            <person name="Weidman J.F."/>
            <person name="McDonald L.A."/>
            <person name="Utterback T.R."/>
            <person name="Cotton M.D."/>
            <person name="Spriggs T."/>
            <person name="Artiach P."/>
            <person name="Kaine B.P."/>
            <person name="Sykes S.M."/>
            <person name="Sadow P.W."/>
            <person name="D'Andrea K.P."/>
            <person name="Bowman C."/>
            <person name="Fujii C."/>
            <person name="Garland S.A."/>
            <person name="Mason T.M."/>
            <person name="Olsen G.J."/>
            <person name="Fraser C.M."/>
            <person name="Smith H.O."/>
            <person name="Woese C.R."/>
            <person name="Venter J.C."/>
        </authorList>
    </citation>
    <scope>NUCLEOTIDE SEQUENCE [LARGE SCALE GENOMIC DNA]</scope>
    <source>
        <strain>ATCC 49558 / DSM 4304 / JCM 9628 / NBRC 100126 / VC-16</strain>
    </source>
</reference>
<organism>
    <name type="scientific">Archaeoglobus fulgidus (strain ATCC 49558 / DSM 4304 / JCM 9628 / NBRC 100126 / VC-16)</name>
    <dbReference type="NCBI Taxonomy" id="224325"/>
    <lineage>
        <taxon>Archaea</taxon>
        <taxon>Methanobacteriati</taxon>
        <taxon>Methanobacteriota</taxon>
        <taxon>Archaeoglobi</taxon>
        <taxon>Archaeoglobales</taxon>
        <taxon>Archaeoglobaceae</taxon>
        <taxon>Archaeoglobus</taxon>
    </lineage>
</organism>
<dbReference type="EMBL" id="AE000782">
    <property type="protein sequence ID" value="AAB89896.1"/>
    <property type="molecule type" value="Genomic_DNA"/>
</dbReference>
<dbReference type="PIR" id="H69418">
    <property type="entry name" value="H69418"/>
</dbReference>
<dbReference type="SMR" id="O28918"/>
<dbReference type="STRING" id="224325.AF_1353"/>
<dbReference type="PaxDb" id="224325-AF_1353"/>
<dbReference type="EnsemblBacteria" id="AAB89896">
    <property type="protein sequence ID" value="AAB89896"/>
    <property type="gene ID" value="AF_1353"/>
</dbReference>
<dbReference type="KEGG" id="afu:AF_1353"/>
<dbReference type="eggNOG" id="arCOG08621">
    <property type="taxonomic scope" value="Archaea"/>
</dbReference>
<dbReference type="HOGENOM" id="CLU_741070_0_0_2"/>
<dbReference type="OrthoDB" id="94500at2157"/>
<dbReference type="Proteomes" id="UP000002199">
    <property type="component" value="Chromosome"/>
</dbReference>
<dbReference type="Gene3D" id="2.130.10.10">
    <property type="entry name" value="YVTN repeat-like/Quinoprotein amine dehydrogenase"/>
    <property type="match status" value="1"/>
</dbReference>
<dbReference type="InterPro" id="IPR011047">
    <property type="entry name" value="Quinoprotein_ADH-like_sf"/>
</dbReference>
<dbReference type="InterPro" id="IPR015943">
    <property type="entry name" value="WD40/YVTN_repeat-like_dom_sf"/>
</dbReference>
<dbReference type="SUPFAM" id="SSF50998">
    <property type="entry name" value="Quinoprotein alcohol dehydrogenase-like"/>
    <property type="match status" value="1"/>
</dbReference>
<dbReference type="PROSITE" id="PS51257">
    <property type="entry name" value="PROKAR_LIPOPROTEIN"/>
    <property type="match status" value="1"/>
</dbReference>
<feature type="signal peptide" evidence="1">
    <location>
        <begin position="1"/>
        <end position="28"/>
    </location>
</feature>
<feature type="chain" id="PRO_0000013659" description="Uncharacterized protein AF_1353">
    <location>
        <begin position="29"/>
        <end position="353"/>
    </location>
</feature>
<name>Y1353_ARCFU</name>
<protein>
    <recommendedName>
        <fullName>Uncharacterized protein AF_1353</fullName>
    </recommendedName>
</protein>
<evidence type="ECO:0000255" key="1">
    <source>
        <dbReference type="PROSITE-ProRule" id="PRU00303"/>
    </source>
</evidence>
<sequence length="353" mass="39283">MHLTIMRRFAVLLLLAIFLGGCSGSNGAAEEKWKMKVIWHVDTSGEPFMDLSPDGELAAAVDWNNAKIYLVKPDGESVVFDIQGQDAVKPVVSGVALKDGVAYVLGSYEDFVGIRKYSWNGEVGEERHGWAGSVSDNILRSPSGNHLCYLITIDAGKQELYCDGVKMTLGGDYYFLNSVSDSGVVVISSGDGTHVFKEGNEVLSFNTSNVVAYKDRVLVNEEDFLRVYDLSGNLVGEKEGYTFSLTTLLRWTLLPTERYIFRYEPLEDTHVITWDIKQVETLPGFPQFANDHFVVTSKNGVLHCYSLKDFHEVFSVEMPEDDGLIKLSDDGRVMLVSGENGGYWLYVSSENNF</sequence>
<gene>
    <name type="ordered locus">AF_1353</name>
</gene>
<accession>O28918</accession>
<keyword id="KW-1185">Reference proteome</keyword>
<keyword id="KW-0732">Signal</keyword>